<sequence>MPGLFQAEGIVLKSRDYQETDQLLTILTRTHGKLEAIVKGVRKPRSSLRSGTQQLCRSRFLFYAGKSLATVTQCEVQEIYGPLRQDLKRLAYAYYLVEIADGVVMPGQVNQAMYLLLQQGLEALGELEPALVARAFEARTLKLLGLAPRLEACALCQRELKGNGRVAIAPAAGGALCPECRGHQGREYLVSRGGVKTWQQLNRLNWSYLKRLQINPMLMGELGEVMPAFLEYYLDRRLRSRAFINEIGGDNIDGPGKNRPVAQAPGT</sequence>
<name>RECO_MOOTA</name>
<protein>
    <recommendedName>
        <fullName evidence="1">DNA repair protein RecO</fullName>
    </recommendedName>
    <alternativeName>
        <fullName evidence="1">Recombination protein O</fullName>
    </alternativeName>
</protein>
<evidence type="ECO:0000255" key="1">
    <source>
        <dbReference type="HAMAP-Rule" id="MF_00201"/>
    </source>
</evidence>
<reference key="1">
    <citation type="journal article" date="2008" name="Environ. Microbiol.">
        <title>The complete genome sequence of Moorella thermoacetica (f. Clostridium thermoaceticum).</title>
        <authorList>
            <person name="Pierce E."/>
            <person name="Xie G."/>
            <person name="Barabote R.D."/>
            <person name="Saunders E."/>
            <person name="Han C.S."/>
            <person name="Detter J.C."/>
            <person name="Richardson P."/>
            <person name="Brettin T.S."/>
            <person name="Das A."/>
            <person name="Ljungdahl L.G."/>
            <person name="Ragsdale S.W."/>
        </authorList>
    </citation>
    <scope>NUCLEOTIDE SEQUENCE [LARGE SCALE GENOMIC DNA]</scope>
    <source>
        <strain>ATCC 39073 / JCM 9320</strain>
    </source>
</reference>
<comment type="function">
    <text evidence="1">Involved in DNA repair and RecF pathway recombination.</text>
</comment>
<comment type="similarity">
    <text evidence="1">Belongs to the RecO family.</text>
</comment>
<organism>
    <name type="scientific">Moorella thermoacetica (strain ATCC 39073 / JCM 9320)</name>
    <dbReference type="NCBI Taxonomy" id="264732"/>
    <lineage>
        <taxon>Bacteria</taxon>
        <taxon>Bacillati</taxon>
        <taxon>Bacillota</taxon>
        <taxon>Clostridia</taxon>
        <taxon>Moorellales</taxon>
        <taxon>Moorellaceae</taxon>
        <taxon>Moorella</taxon>
    </lineage>
</organism>
<dbReference type="EMBL" id="CP000232">
    <property type="protein sequence ID" value="ABC18931.1"/>
    <property type="molecule type" value="Genomic_DNA"/>
</dbReference>
<dbReference type="RefSeq" id="YP_429474.1">
    <property type="nucleotide sequence ID" value="NC_007644.1"/>
</dbReference>
<dbReference type="SMR" id="Q2RKV8"/>
<dbReference type="STRING" id="264732.Moth_0601"/>
<dbReference type="EnsemblBacteria" id="ABC18931">
    <property type="protein sequence ID" value="ABC18931"/>
    <property type="gene ID" value="Moth_0601"/>
</dbReference>
<dbReference type="KEGG" id="mta:Moth_0601"/>
<dbReference type="PATRIC" id="fig|264732.11.peg.646"/>
<dbReference type="eggNOG" id="COG1381">
    <property type="taxonomic scope" value="Bacteria"/>
</dbReference>
<dbReference type="HOGENOM" id="CLU_066632_2_0_9"/>
<dbReference type="OrthoDB" id="9797083at2"/>
<dbReference type="GO" id="GO:0043590">
    <property type="term" value="C:bacterial nucleoid"/>
    <property type="evidence" value="ECO:0007669"/>
    <property type="project" value="TreeGrafter"/>
</dbReference>
<dbReference type="GO" id="GO:0006310">
    <property type="term" value="P:DNA recombination"/>
    <property type="evidence" value="ECO:0007669"/>
    <property type="project" value="UniProtKB-UniRule"/>
</dbReference>
<dbReference type="GO" id="GO:0006302">
    <property type="term" value="P:double-strand break repair"/>
    <property type="evidence" value="ECO:0007669"/>
    <property type="project" value="TreeGrafter"/>
</dbReference>
<dbReference type="Gene3D" id="2.40.50.140">
    <property type="entry name" value="Nucleic acid-binding proteins"/>
    <property type="match status" value="1"/>
</dbReference>
<dbReference type="Gene3D" id="1.20.1440.120">
    <property type="entry name" value="Recombination protein O, C-terminal domain"/>
    <property type="match status" value="1"/>
</dbReference>
<dbReference type="HAMAP" id="MF_00201">
    <property type="entry name" value="RecO"/>
    <property type="match status" value="1"/>
</dbReference>
<dbReference type="InterPro" id="IPR037278">
    <property type="entry name" value="ARFGAP/RecO"/>
</dbReference>
<dbReference type="InterPro" id="IPR022572">
    <property type="entry name" value="DNA_rep/recomb_RecO_N"/>
</dbReference>
<dbReference type="InterPro" id="IPR012340">
    <property type="entry name" value="NA-bd_OB-fold"/>
</dbReference>
<dbReference type="InterPro" id="IPR003717">
    <property type="entry name" value="RecO"/>
</dbReference>
<dbReference type="InterPro" id="IPR042242">
    <property type="entry name" value="RecO_C"/>
</dbReference>
<dbReference type="NCBIfam" id="TIGR00613">
    <property type="entry name" value="reco"/>
    <property type="match status" value="1"/>
</dbReference>
<dbReference type="PANTHER" id="PTHR33991">
    <property type="entry name" value="DNA REPAIR PROTEIN RECO"/>
    <property type="match status" value="1"/>
</dbReference>
<dbReference type="PANTHER" id="PTHR33991:SF1">
    <property type="entry name" value="DNA REPAIR PROTEIN RECO"/>
    <property type="match status" value="1"/>
</dbReference>
<dbReference type="Pfam" id="PF02565">
    <property type="entry name" value="RecO_C"/>
    <property type="match status" value="1"/>
</dbReference>
<dbReference type="Pfam" id="PF11967">
    <property type="entry name" value="RecO_N"/>
    <property type="match status" value="1"/>
</dbReference>
<dbReference type="SUPFAM" id="SSF57863">
    <property type="entry name" value="ArfGap/RecO-like zinc finger"/>
    <property type="match status" value="1"/>
</dbReference>
<dbReference type="SUPFAM" id="SSF50249">
    <property type="entry name" value="Nucleic acid-binding proteins"/>
    <property type="match status" value="1"/>
</dbReference>
<gene>
    <name evidence="1" type="primary">recO</name>
    <name type="ordered locus">Moth_0601</name>
</gene>
<feature type="chain" id="PRO_0000264823" description="DNA repair protein RecO">
    <location>
        <begin position="1"/>
        <end position="267"/>
    </location>
</feature>
<keyword id="KW-0227">DNA damage</keyword>
<keyword id="KW-0233">DNA recombination</keyword>
<keyword id="KW-0234">DNA repair</keyword>
<proteinExistence type="inferred from homology"/>
<accession>Q2RKV8</accession>